<feature type="chain" id="PRO_0000431719" description="Arginyl-tRNA--protein transferase 2">
    <location>
        <begin position="1"/>
        <end position="605"/>
    </location>
</feature>
<feature type="region of interest" description="Disordered" evidence="2">
    <location>
        <begin position="496"/>
        <end position="549"/>
    </location>
</feature>
<feature type="compositionally biased region" description="Low complexity" evidence="2">
    <location>
        <begin position="496"/>
        <end position="513"/>
    </location>
</feature>
<feature type="compositionally biased region" description="Acidic residues" evidence="2">
    <location>
        <begin position="518"/>
        <end position="541"/>
    </location>
</feature>
<name>ATE2_ARATH</name>
<reference key="1">
    <citation type="journal article" date="2000" name="Nature">
        <title>Sequence and analysis of chromosome 3 of the plant Arabidopsis thaliana.</title>
        <authorList>
            <person name="Salanoubat M."/>
            <person name="Lemcke K."/>
            <person name="Rieger M."/>
            <person name="Ansorge W."/>
            <person name="Unseld M."/>
            <person name="Fartmann B."/>
            <person name="Valle G."/>
            <person name="Bloecker H."/>
            <person name="Perez-Alonso M."/>
            <person name="Obermaier B."/>
            <person name="Delseny M."/>
            <person name="Boutry M."/>
            <person name="Grivell L.A."/>
            <person name="Mache R."/>
            <person name="Puigdomenech P."/>
            <person name="De Simone V."/>
            <person name="Choisne N."/>
            <person name="Artiguenave F."/>
            <person name="Robert C."/>
            <person name="Brottier P."/>
            <person name="Wincker P."/>
            <person name="Cattolico L."/>
            <person name="Weissenbach J."/>
            <person name="Saurin W."/>
            <person name="Quetier F."/>
            <person name="Schaefer M."/>
            <person name="Mueller-Auer S."/>
            <person name="Gabel C."/>
            <person name="Fuchs M."/>
            <person name="Benes V."/>
            <person name="Wurmbach E."/>
            <person name="Drzonek H."/>
            <person name="Erfle H."/>
            <person name="Jordan N."/>
            <person name="Bangert S."/>
            <person name="Wiedelmann R."/>
            <person name="Kranz H."/>
            <person name="Voss H."/>
            <person name="Holland R."/>
            <person name="Brandt P."/>
            <person name="Nyakatura G."/>
            <person name="Vezzi A."/>
            <person name="D'Angelo M."/>
            <person name="Pallavicini A."/>
            <person name="Toppo S."/>
            <person name="Simionati B."/>
            <person name="Conrad A."/>
            <person name="Hornischer K."/>
            <person name="Kauer G."/>
            <person name="Loehnert T.-H."/>
            <person name="Nordsiek G."/>
            <person name="Reichelt J."/>
            <person name="Scharfe M."/>
            <person name="Schoen O."/>
            <person name="Bargues M."/>
            <person name="Terol J."/>
            <person name="Climent J."/>
            <person name="Navarro P."/>
            <person name="Collado C."/>
            <person name="Perez-Perez A."/>
            <person name="Ottenwaelder B."/>
            <person name="Duchemin D."/>
            <person name="Cooke R."/>
            <person name="Laudie M."/>
            <person name="Berger-Llauro C."/>
            <person name="Purnelle B."/>
            <person name="Masuy D."/>
            <person name="de Haan M."/>
            <person name="Maarse A.C."/>
            <person name="Alcaraz J.-P."/>
            <person name="Cottet A."/>
            <person name="Casacuberta E."/>
            <person name="Monfort A."/>
            <person name="Argiriou A."/>
            <person name="Flores M."/>
            <person name="Liguori R."/>
            <person name="Vitale D."/>
            <person name="Mannhaupt G."/>
            <person name="Haase D."/>
            <person name="Schoof H."/>
            <person name="Rudd S."/>
            <person name="Zaccaria P."/>
            <person name="Mewes H.-W."/>
            <person name="Mayer K.F.X."/>
            <person name="Kaul S."/>
            <person name="Town C.D."/>
            <person name="Koo H.L."/>
            <person name="Tallon L.J."/>
            <person name="Jenkins J."/>
            <person name="Rooney T."/>
            <person name="Rizzo M."/>
            <person name="Walts A."/>
            <person name="Utterback T."/>
            <person name="Fujii C.Y."/>
            <person name="Shea T.P."/>
            <person name="Creasy T.H."/>
            <person name="Haas B."/>
            <person name="Maiti R."/>
            <person name="Wu D."/>
            <person name="Peterson J."/>
            <person name="Van Aken S."/>
            <person name="Pai G."/>
            <person name="Militscher J."/>
            <person name="Sellers P."/>
            <person name="Gill J.E."/>
            <person name="Feldblyum T.V."/>
            <person name="Preuss D."/>
            <person name="Lin X."/>
            <person name="Nierman W.C."/>
            <person name="Salzberg S.L."/>
            <person name="White O."/>
            <person name="Venter J.C."/>
            <person name="Fraser C.M."/>
            <person name="Kaneko T."/>
            <person name="Nakamura Y."/>
            <person name="Sato S."/>
            <person name="Kato T."/>
            <person name="Asamizu E."/>
            <person name="Sasamoto S."/>
            <person name="Kimura T."/>
            <person name="Idesawa K."/>
            <person name="Kawashima K."/>
            <person name="Kishida Y."/>
            <person name="Kiyokawa C."/>
            <person name="Kohara M."/>
            <person name="Matsumoto M."/>
            <person name="Matsuno A."/>
            <person name="Muraki A."/>
            <person name="Nakayama S."/>
            <person name="Nakazaki N."/>
            <person name="Shinpo S."/>
            <person name="Takeuchi C."/>
            <person name="Wada T."/>
            <person name="Watanabe A."/>
            <person name="Yamada M."/>
            <person name="Yasuda M."/>
            <person name="Tabata S."/>
        </authorList>
    </citation>
    <scope>NUCLEOTIDE SEQUENCE [LARGE SCALE GENOMIC DNA]</scope>
    <source>
        <strain>cv. Columbia</strain>
    </source>
</reference>
<reference key="2">
    <citation type="journal article" date="2017" name="Plant J.">
        <title>Araport11: a complete reannotation of the Arabidopsis thaliana reference genome.</title>
        <authorList>
            <person name="Cheng C.Y."/>
            <person name="Krishnakumar V."/>
            <person name="Chan A.P."/>
            <person name="Thibaud-Nissen F."/>
            <person name="Schobel S."/>
            <person name="Town C.D."/>
        </authorList>
    </citation>
    <scope>GENOME REANNOTATION</scope>
    <source>
        <strain>cv. Columbia</strain>
    </source>
</reference>
<reference key="3">
    <citation type="journal article" date="2003" name="Science">
        <title>Empirical analysis of transcriptional activity in the Arabidopsis genome.</title>
        <authorList>
            <person name="Yamada K."/>
            <person name="Lim J."/>
            <person name="Dale J.M."/>
            <person name="Chen H."/>
            <person name="Shinn P."/>
            <person name="Palm C.J."/>
            <person name="Southwick A.M."/>
            <person name="Wu H.C."/>
            <person name="Kim C.J."/>
            <person name="Nguyen M."/>
            <person name="Pham P.K."/>
            <person name="Cheuk R.F."/>
            <person name="Karlin-Newmann G."/>
            <person name="Liu S.X."/>
            <person name="Lam B."/>
            <person name="Sakano H."/>
            <person name="Wu T."/>
            <person name="Yu G."/>
            <person name="Miranda M."/>
            <person name="Quach H.L."/>
            <person name="Tripp M."/>
            <person name="Chang C.H."/>
            <person name="Lee J.M."/>
            <person name="Toriumi M.J."/>
            <person name="Chan M.M."/>
            <person name="Tang C.C."/>
            <person name="Onodera C.S."/>
            <person name="Deng J.M."/>
            <person name="Akiyama K."/>
            <person name="Ansari Y."/>
            <person name="Arakawa T."/>
            <person name="Banh J."/>
            <person name="Banno F."/>
            <person name="Bowser L."/>
            <person name="Brooks S.Y."/>
            <person name="Carninci P."/>
            <person name="Chao Q."/>
            <person name="Choy N."/>
            <person name="Enju A."/>
            <person name="Goldsmith A.D."/>
            <person name="Gurjal M."/>
            <person name="Hansen N.F."/>
            <person name="Hayashizaki Y."/>
            <person name="Johnson-Hopson C."/>
            <person name="Hsuan V.W."/>
            <person name="Iida K."/>
            <person name="Karnes M."/>
            <person name="Khan S."/>
            <person name="Koesema E."/>
            <person name="Ishida J."/>
            <person name="Jiang P.X."/>
            <person name="Jones T."/>
            <person name="Kawai J."/>
            <person name="Kamiya A."/>
            <person name="Meyers C."/>
            <person name="Nakajima M."/>
            <person name="Narusaka M."/>
            <person name="Seki M."/>
            <person name="Sakurai T."/>
            <person name="Satou M."/>
            <person name="Tamse R."/>
            <person name="Vaysberg M."/>
            <person name="Wallender E.K."/>
            <person name="Wong C."/>
            <person name="Yamamura Y."/>
            <person name="Yuan S."/>
            <person name="Shinozaki K."/>
            <person name="Davis R.W."/>
            <person name="Theologis A."/>
            <person name="Ecker J.R."/>
        </authorList>
    </citation>
    <scope>NUCLEOTIDE SEQUENCE [LARGE SCALE MRNA]</scope>
    <source>
        <strain>cv. Columbia</strain>
    </source>
</reference>
<reference key="4">
    <citation type="journal article" date="2009" name="Proc. Natl. Acad. Sci. U.S.A.">
        <title>The N-end rule pathway promotes seed germination and establishment through removal of ABA sensitivity in Arabidopsis.</title>
        <authorList>
            <person name="Holman T.J."/>
            <person name="Jones P.D."/>
            <person name="Russell L."/>
            <person name="Medhurst A."/>
            <person name="Ubeda Tomas S."/>
            <person name="Talloji P."/>
            <person name="Marquez J."/>
            <person name="Schmuths H."/>
            <person name="Tung S.A."/>
            <person name="Taylor I."/>
            <person name="Footitt S."/>
            <person name="Bachmair A."/>
            <person name="Theodoulou F.L."/>
            <person name="Holdsworth M.J."/>
        </authorList>
    </citation>
    <scope>FUNCTION</scope>
    <scope>DISRUPTION PHENOTYPE</scope>
</reference>
<reference key="5">
    <citation type="journal article" date="2009" name="Proc. Natl. Acad. Sci. U.S.A.">
        <title>The N-end rule pathway controls multiple functions during Arabidopsis shoot and leaf development.</title>
        <authorList>
            <person name="Graciet E."/>
            <person name="Walter F."/>
            <person name="O'Maoileidigh D.S."/>
            <person name="Pollmann S."/>
            <person name="Meyerowitz E.M."/>
            <person name="Varshavsky A."/>
            <person name="Wellmer F."/>
        </authorList>
    </citation>
    <scope>FUNCTION</scope>
    <scope>DISRUPTION PHENOTYPE</scope>
</reference>
<reference key="6">
    <citation type="journal article" date="2011" name="Nature">
        <title>Oxygen sensing in plants is mediated by an N-end rule pathway for protein destabilization.</title>
        <authorList>
            <person name="Licausi F."/>
            <person name="Kosmacz M."/>
            <person name="Weits D.A."/>
            <person name="Giuntoli B."/>
            <person name="Giorgi F.M."/>
            <person name="Voesenek L.A."/>
            <person name="Perata P."/>
            <person name="van Dongen J.T."/>
        </authorList>
    </citation>
    <scope>FUNCTION</scope>
</reference>
<reference key="7">
    <citation type="journal article" date="2016" name="Sci. Rep.">
        <title>The N-end rule pathway regulates pathogen responses in plants.</title>
        <authorList>
            <person name="de Marchi R."/>
            <person name="Sorel M."/>
            <person name="Mooney B."/>
            <person name="Fudal I."/>
            <person name="Goslin K."/>
            <person name="Kwasniewska K."/>
            <person name="Ryan P.T."/>
            <person name="Pfalz M."/>
            <person name="Kroymann J."/>
            <person name="Pollmann S."/>
            <person name="Feechan A."/>
            <person name="Wellmer F."/>
            <person name="Rivas S."/>
            <person name="Graciet E."/>
        </authorList>
    </citation>
    <scope>FUNCTION</scope>
</reference>
<evidence type="ECO:0000255" key="1">
    <source>
        <dbReference type="PIRNR" id="PIRNR037207"/>
    </source>
</evidence>
<evidence type="ECO:0000256" key="2">
    <source>
        <dbReference type="SAM" id="MobiDB-lite"/>
    </source>
</evidence>
<evidence type="ECO:0000269" key="3">
    <source>
    </source>
</evidence>
<evidence type="ECO:0000269" key="4">
    <source>
    </source>
</evidence>
<evidence type="ECO:0000269" key="5">
    <source>
    </source>
</evidence>
<evidence type="ECO:0000269" key="6">
    <source>
    </source>
</evidence>
<evidence type="ECO:0000303" key="7">
    <source>
    </source>
</evidence>
<evidence type="ECO:0000303" key="8">
    <source>
    </source>
</evidence>
<evidence type="ECO:0000305" key="9"/>
<evidence type="ECO:0000312" key="10">
    <source>
        <dbReference type="Araport" id="AT3G11240"/>
    </source>
</evidence>
<evidence type="ECO:0000312" key="11">
    <source>
        <dbReference type="EMBL" id="AAG50969.1"/>
    </source>
</evidence>
<dbReference type="EC" id="2.3.2.8" evidence="9"/>
<dbReference type="EMBL" id="AC073395">
    <property type="protein sequence ID" value="AAG50969.1"/>
    <property type="molecule type" value="Genomic_DNA"/>
</dbReference>
<dbReference type="EMBL" id="CP002686">
    <property type="protein sequence ID" value="AEE75019.1"/>
    <property type="molecule type" value="Genomic_DNA"/>
</dbReference>
<dbReference type="EMBL" id="AF370200">
    <property type="protein sequence ID" value="AAK44015.1"/>
    <property type="molecule type" value="mRNA"/>
</dbReference>
<dbReference type="EMBL" id="AY056368">
    <property type="protein sequence ID" value="AAL07254.1"/>
    <property type="molecule type" value="mRNA"/>
</dbReference>
<dbReference type="RefSeq" id="NP_187733.1">
    <property type="nucleotide sequence ID" value="NM_111959.3"/>
</dbReference>
<dbReference type="SMR" id="Q9C776"/>
<dbReference type="FunCoup" id="Q9C776">
    <property type="interactions" value="4283"/>
</dbReference>
<dbReference type="STRING" id="3702.Q9C776"/>
<dbReference type="PaxDb" id="3702-AT3G11240.1"/>
<dbReference type="ProteomicsDB" id="246721"/>
<dbReference type="EnsemblPlants" id="AT3G11240.1">
    <property type="protein sequence ID" value="AT3G11240.1"/>
    <property type="gene ID" value="AT3G11240"/>
</dbReference>
<dbReference type="GeneID" id="820295"/>
<dbReference type="Gramene" id="AT3G11240.1">
    <property type="protein sequence ID" value="AT3G11240.1"/>
    <property type="gene ID" value="AT3G11240"/>
</dbReference>
<dbReference type="KEGG" id="ath:AT3G11240"/>
<dbReference type="Araport" id="AT3G11240"/>
<dbReference type="TAIR" id="AT3G11240">
    <property type="gene designation" value="ATE2"/>
</dbReference>
<dbReference type="eggNOG" id="KOG1193">
    <property type="taxonomic scope" value="Eukaryota"/>
</dbReference>
<dbReference type="HOGENOM" id="CLU_020349_1_0_1"/>
<dbReference type="InParanoid" id="Q9C776"/>
<dbReference type="OMA" id="NTNKMSY"/>
<dbReference type="PhylomeDB" id="Q9C776"/>
<dbReference type="PRO" id="PR:Q9C776"/>
<dbReference type="Proteomes" id="UP000006548">
    <property type="component" value="Chromosome 3"/>
</dbReference>
<dbReference type="ExpressionAtlas" id="Q9C776">
    <property type="expression patterns" value="baseline and differential"/>
</dbReference>
<dbReference type="GO" id="GO:0004057">
    <property type="term" value="F:arginyl-tRNA--protein transferase activity"/>
    <property type="evidence" value="ECO:0007669"/>
    <property type="project" value="UniProtKB-EC"/>
</dbReference>
<dbReference type="GO" id="GO:0050832">
    <property type="term" value="P:defense response to fungus"/>
    <property type="evidence" value="ECO:0000316"/>
    <property type="project" value="TAIR"/>
</dbReference>
<dbReference type="GO" id="GO:0050994">
    <property type="term" value="P:regulation of lipid catabolic process"/>
    <property type="evidence" value="ECO:0000316"/>
    <property type="project" value="TAIR"/>
</dbReference>
<dbReference type="GO" id="GO:0010029">
    <property type="term" value="P:regulation of seed germination"/>
    <property type="evidence" value="ECO:0000316"/>
    <property type="project" value="TAIR"/>
</dbReference>
<dbReference type="GO" id="GO:0009737">
    <property type="term" value="P:response to abscisic acid"/>
    <property type="evidence" value="ECO:0000316"/>
    <property type="project" value="TAIR"/>
</dbReference>
<dbReference type="InterPro" id="IPR016181">
    <property type="entry name" value="Acyl_CoA_acyltransferase"/>
</dbReference>
<dbReference type="InterPro" id="IPR017137">
    <property type="entry name" value="Arg-tRNA-P_Trfase_1_euk"/>
</dbReference>
<dbReference type="InterPro" id="IPR030700">
    <property type="entry name" value="N-end_Aminoacyl_Trfase"/>
</dbReference>
<dbReference type="InterPro" id="IPR007472">
    <property type="entry name" value="N-end_Aminoacyl_Trfase_C"/>
</dbReference>
<dbReference type="InterPro" id="IPR007471">
    <property type="entry name" value="N-end_Aminoacyl_Trfase_N"/>
</dbReference>
<dbReference type="PANTHER" id="PTHR21367">
    <property type="entry name" value="ARGININE-TRNA-PROTEIN TRANSFERASE 1"/>
    <property type="match status" value="1"/>
</dbReference>
<dbReference type="PANTHER" id="PTHR21367:SF1">
    <property type="entry name" value="ARGINYL-TRNA--PROTEIN TRANSFERASE 1"/>
    <property type="match status" value="1"/>
</dbReference>
<dbReference type="Pfam" id="PF04377">
    <property type="entry name" value="ATE_C"/>
    <property type="match status" value="1"/>
</dbReference>
<dbReference type="Pfam" id="PF04376">
    <property type="entry name" value="ATE_N"/>
    <property type="match status" value="1"/>
</dbReference>
<dbReference type="PIRSF" id="PIRSF037207">
    <property type="entry name" value="ATE1_euk"/>
    <property type="match status" value="1"/>
</dbReference>
<dbReference type="SUPFAM" id="SSF55729">
    <property type="entry name" value="Acyl-CoA N-acyltransferases (Nat)"/>
    <property type="match status" value="1"/>
</dbReference>
<gene>
    <name evidence="7" type="primary">ATE2</name>
    <name evidence="10" type="ordered locus">At3g11240</name>
    <name evidence="11" type="ORF">F11B9.16</name>
</gene>
<keyword id="KW-0012">Acyltransferase</keyword>
<keyword id="KW-0611">Plant defense</keyword>
<keyword id="KW-1185">Reference proteome</keyword>
<keyword id="KW-0808">Transferase</keyword>
<keyword id="KW-0833">Ubl conjugation pathway</keyword>
<comment type="function">
    <text evidence="3 4 5 6">Involved in the post-translational conjugation of arginine to the N-terminal aspartate or glutamate of a protein. This arginylation is required for degradation of the protein via the ubiquitin pathway. Component of the N-end rule pathway with ATE1 and PRT6 (PubMed:19255443, PubMed:19620738, PubMed:22020282). The N-end rule pathway regulates seed after-ripening, seedling sugar sensitivity, seedling lipid breakdown, and abscisic acid (ABA) sensitivity of germination (PubMed:19255443). The end-rule pathway regulates various aspects of leaf and shoot development (PubMed:19620738). Involved in the oxygen-dependent N-arginylation of RAP2-12, an activator of hypoxic gene expression. This N-terminal modification leads to ubiquitination by PRT6 and subsequent degradation of RAP2-12 under aerobic conditions (PubMed:22020282). Involved in disease resistance (PubMed:27173012). The end-rule pathway plays a role in regulating the timing and amplitude of the immune response following infection with the bacterial pathogen Pseudomonas syringae pv tomato (PubMed:27173012). Regulates the biosynthesis of plant-defense metabolites such as glucosinolates, and the biosynthesis and response to the phytohormone jasmonate (JA), which plays a key role in plant immunity (PubMed:27173012).</text>
</comment>
<comment type="catalytic activity">
    <reaction evidence="9">
        <text>an N-terminal L-alpha-aminoacyl-[protein] + L-arginyl-tRNA(Arg) = an N-terminal L-arginyl-L-aminoacyl-[protein] + tRNA(Arg) + H(+)</text>
        <dbReference type="Rhea" id="RHEA:10208"/>
        <dbReference type="Rhea" id="RHEA-COMP:9658"/>
        <dbReference type="Rhea" id="RHEA-COMP:9673"/>
        <dbReference type="Rhea" id="RHEA-COMP:10636"/>
        <dbReference type="Rhea" id="RHEA-COMP:10638"/>
        <dbReference type="ChEBI" id="CHEBI:15378"/>
        <dbReference type="ChEBI" id="CHEBI:78442"/>
        <dbReference type="ChEBI" id="CHEBI:78513"/>
        <dbReference type="ChEBI" id="CHEBI:78597"/>
        <dbReference type="ChEBI" id="CHEBI:83562"/>
        <dbReference type="EC" id="2.3.2.8"/>
    </reaction>
</comment>
<comment type="disruption phenotype">
    <text evidence="3 4">The double mutants ate1 and ate2 show reduced seed germination potential and inhibition of seedling establishment by sucrose (PubMed:19255443). The double mutants ate1 and ate2 exhibit abnormal shoot and leaf development (PubMed:19620738).</text>
</comment>
<comment type="similarity">
    <text evidence="1">Belongs to the R-transferase family.</text>
</comment>
<sequence length="605" mass="68599">MSSKKAKTKNEASSSRGGIGGESIVADCGRNKSTCGYCKSSTRFSISHGLWTERLTVNDYQALLDSGWRRSGCYLYKPEMEKTCCPSYTIRLKASDFVPSKEQQRVRRRIERFLDGELDAKPSEQTEDQDVSFSREVSVSVKKSLGAAKREKNNELEPIMKDLSEQIDNAVQKCIQSGEFPSNVQIPKASVKKVFSAKRKKLAEGSEDLLYTSNIAFPIVAAMKHTQTLEKGKNVEENRLSPEAVSEKLLSAMNKVGEFTGFSVKVSKGHINFLSATQVTSSDRNEGEESLCATTIKSSSNKLHARKRKLEMHLKRSSFEPEEYELYKRYQMKVHNDKPESISETSYKRFLVDTPLTEVPSSGYDDEEKIPLCGFGSFHQQYRVDDRLIAVGVIDILPKCLSSKYLFWDPDFASLSLGNYSALQEIDWVKQNQAHCSTLEYYYLGYYIHSCNKMRYKAAYRPSELLCPLRYQWVPFEVAKPLLDKKPYSVLSNISKVSSSSSSPQASETLLESTSEHEDMEQGDTNDDDDEMYNSDEDSDSDSSSSRNRSDITNILISLNGPRLRYKDIPRFKNPVVQKQLESMLVSYRKVVGAELSEIMVYELR</sequence>
<proteinExistence type="evidence at transcript level"/>
<protein>
    <recommendedName>
        <fullName evidence="9">Arginyl-tRNA--protein transferase 2</fullName>
        <shortName evidence="9">Arginyltransferase 2</shortName>
        <shortName evidence="9">R-transferase 2</shortName>
        <ecNumber evidence="9">2.3.2.8</ecNumber>
    </recommendedName>
    <alternativeName>
        <fullName evidence="7">Arginine-tRNA--protein transferase 2</fullName>
    </alternativeName>
    <alternativeName>
        <fullName evidence="8">AtATE2</fullName>
    </alternativeName>
</protein>
<organism>
    <name type="scientific">Arabidopsis thaliana</name>
    <name type="common">Mouse-ear cress</name>
    <dbReference type="NCBI Taxonomy" id="3702"/>
    <lineage>
        <taxon>Eukaryota</taxon>
        <taxon>Viridiplantae</taxon>
        <taxon>Streptophyta</taxon>
        <taxon>Embryophyta</taxon>
        <taxon>Tracheophyta</taxon>
        <taxon>Spermatophyta</taxon>
        <taxon>Magnoliopsida</taxon>
        <taxon>eudicotyledons</taxon>
        <taxon>Gunneridae</taxon>
        <taxon>Pentapetalae</taxon>
        <taxon>rosids</taxon>
        <taxon>malvids</taxon>
        <taxon>Brassicales</taxon>
        <taxon>Brassicaceae</taxon>
        <taxon>Camelineae</taxon>
        <taxon>Arabidopsis</taxon>
    </lineage>
</organism>
<accession>Q9C776</accession>